<protein>
    <recommendedName>
        <fullName evidence="4">Phosphopantothenoylcysteine decarboxylase HAL3</fullName>
        <shortName evidence="3">PPCDC</shortName>
        <ecNumber evidence="2">4.1.1.36</ecNumber>
    </recommendedName>
    <alternativeName>
        <fullName evidence="3">Halotolerance protein 3</fullName>
        <shortName evidence="3">MdHAL3</shortName>
    </alternativeName>
</protein>
<sequence length="214" mass="23535">MTSSEPASPEIEQQANSAPRRPRILLAASGSVAAIKFGNLCHSFSEWAEVKAVATRASLHFIDRASLPKDVILYTEEDEWSTWNKVGDSVLHIELRSWADILVIAPLSANTLGKIAGGLCDNLLTCIVRAWDYSKPFFVAPAMNTLMWKNPFTEQHIMSIDELGVSLIPPVTKRLACGDYGNGAMAEPSVIYSTVRLFFESRVQQSGNIVQQPV</sequence>
<proteinExistence type="evidence at protein level"/>
<accession>A0A498JQK2</accession>
<evidence type="ECO:0000250" key="1">
    <source>
        <dbReference type="UniProtKB" id="Q9SWE5"/>
    </source>
</evidence>
<evidence type="ECO:0000269" key="2">
    <source>
    </source>
</evidence>
<evidence type="ECO:0000303" key="3">
    <source>
    </source>
</evidence>
<evidence type="ECO:0000305" key="4"/>
<evidence type="ECO:0000312" key="5">
    <source>
        <dbReference type="EMBL" id="RXH96124.1"/>
    </source>
</evidence>
<organism>
    <name type="scientific">Malus domestica</name>
    <name type="common">Apple</name>
    <name type="synonym">Pyrus malus</name>
    <dbReference type="NCBI Taxonomy" id="3750"/>
    <lineage>
        <taxon>Eukaryota</taxon>
        <taxon>Viridiplantae</taxon>
        <taxon>Streptophyta</taxon>
        <taxon>Embryophyta</taxon>
        <taxon>Tracheophyta</taxon>
        <taxon>Spermatophyta</taxon>
        <taxon>Magnoliopsida</taxon>
        <taxon>eudicotyledons</taxon>
        <taxon>Gunneridae</taxon>
        <taxon>Pentapetalae</taxon>
        <taxon>rosids</taxon>
        <taxon>fabids</taxon>
        <taxon>Rosales</taxon>
        <taxon>Rosaceae</taxon>
        <taxon>Amygdaloideae</taxon>
        <taxon>Maleae</taxon>
        <taxon>Malus</taxon>
    </lineage>
</organism>
<gene>
    <name evidence="3" type="primary">HAL3</name>
    <name evidence="5" type="ORF">DVH24_008624</name>
</gene>
<reference key="1">
    <citation type="journal article" date="2019" name="Nat. Commun.">
        <title>A high-quality apple genome assembly reveals the association of a retrotransposon and red fruit colour.</title>
        <authorList>
            <person name="Zhang L."/>
            <person name="Hu J."/>
            <person name="Han X."/>
            <person name="Li J."/>
            <person name="Gao Y."/>
            <person name="Richards C.M."/>
            <person name="Zhang C."/>
            <person name="Tian Y."/>
            <person name="Liu G."/>
            <person name="Gul H."/>
            <person name="Wang D."/>
            <person name="Tian Y."/>
            <person name="Yang C."/>
            <person name="Meng M."/>
            <person name="Yuan G."/>
            <person name="Kang G."/>
            <person name="Wu Y."/>
            <person name="Wang K."/>
            <person name="Zhang H."/>
            <person name="Wang D."/>
            <person name="Cong P."/>
        </authorList>
    </citation>
    <scope>NUCLEOTIDE SEQUENCE [LARGE SCALE GENOMIC DNA]</scope>
    <source>
        <strain>cv. HFTH1</strain>
        <tissue>Leaf</tissue>
    </source>
</reference>
<reference key="2">
    <citation type="journal article" date="2020" name="Plant Cell Rep.">
        <title>MdHAL3, a 4'-phosphopantothenoylcysteine decarboxylase, is involved in the salt tolerance of autotetraploid apple.</title>
        <authorList>
            <person name="Yang S."/>
            <person name="Zhang F."/>
            <person name="Wang Y."/>
            <person name="Xue H."/>
            <person name="Jiang Q."/>
            <person name="Shi J."/>
            <person name="Dai H."/>
            <person name="Zhang Z."/>
            <person name="Li L."/>
            <person name="He P."/>
            <person name="Li Y."/>
            <person name="Ma Y."/>
        </authorList>
    </citation>
    <scope>FUNCTION</scope>
    <scope>DISRUPTION PHENOTYPE</scope>
    <scope>CATALYTIC ACTIVITY</scope>
    <scope>TISSUE SPECIFICITY</scope>
    <scope>INDUCTION BY SALT STRESS</scope>
    <scope>SUBCELLULAR LOCATION</scope>
    <source>
        <strain>cv. GL-3</strain>
        <strain>cv. Hanfu</strain>
    </source>
</reference>
<keyword id="KW-1003">Cell membrane</keyword>
<keyword id="KW-0173">Coenzyme A biosynthesis</keyword>
<keyword id="KW-0963">Cytoplasm</keyword>
<keyword id="KW-0210">Decarboxylase</keyword>
<keyword id="KW-0285">Flavoprotein</keyword>
<keyword id="KW-0288">FMN</keyword>
<keyword id="KW-0341">Growth regulation</keyword>
<keyword id="KW-0456">Lyase</keyword>
<keyword id="KW-0472">Membrane</keyword>
<keyword id="KW-1185">Reference proteome</keyword>
<keyword id="KW-0346">Stress response</keyword>
<name>HAL3_MALDO</name>
<comment type="function">
    <text evidence="2">Involved in plant growth, and promotes salt and osmotic tolerance, probably via coenzyme A (CoA) accumulation and endogenous proline accumulation (PubMed:32761275). Catalyzes the decarboxylation of 4'-phosphopantothenoylcysteine to 4'-phosphopantetheine, a key step in coenzyme A biosynthesis (PubMed:32761275). Required for roots development (PubMed:32761275).</text>
</comment>
<comment type="catalytic activity">
    <reaction evidence="2">
        <text>N-[(R)-4-phosphopantothenoyl]-L-cysteine + H(+) = (R)-4'-phosphopantetheine + CO2</text>
        <dbReference type="Rhea" id="RHEA:16793"/>
        <dbReference type="ChEBI" id="CHEBI:15378"/>
        <dbReference type="ChEBI" id="CHEBI:16526"/>
        <dbReference type="ChEBI" id="CHEBI:59458"/>
        <dbReference type="ChEBI" id="CHEBI:61723"/>
        <dbReference type="EC" id="4.1.1.36"/>
    </reaction>
    <physiologicalReaction direction="left-to-right" evidence="2">
        <dbReference type="Rhea" id="RHEA:16794"/>
    </physiologicalReaction>
</comment>
<comment type="cofactor">
    <cofactor evidence="1">
        <name>FMN</name>
        <dbReference type="ChEBI" id="CHEBI:58210"/>
    </cofactor>
    <text evidence="1">Binds 1 FMN per subunit.</text>
</comment>
<comment type="pathway">
    <text evidence="1">Cofactor biosynthesis; coenzyme A biosynthesis; CoA from (R)-pantothenate: step 3/5.</text>
</comment>
<comment type="subunit">
    <text evidence="1">Homotrimer.</text>
</comment>
<comment type="subcellular location">
    <subcellularLocation>
        <location evidence="2">Cell membrane</location>
    </subcellularLocation>
    <subcellularLocation>
        <location evidence="2">Cytoplasm</location>
    </subcellularLocation>
</comment>
<comment type="tissue specificity">
    <text evidence="2">Mainly expressed in stems, to a lower extent in flowers, leaves and fruits, and at basal levels in roots.</text>
</comment>
<comment type="induction">
    <text evidence="2">Accumulates upon salt stress (NaCl).</text>
</comment>
<comment type="disruption phenotype">
    <text evidence="2">Reduced coenzyme A (CoA) content (PubMed:32761275). No roots (PubMed:32761275). Decreased salt tolerance (PubMed:32761275).</text>
</comment>
<comment type="similarity">
    <text evidence="4">Belongs to the HFCD (homooligomeric flavin containing Cys decarboxylase) superfamily.</text>
</comment>
<dbReference type="EC" id="4.1.1.36" evidence="2"/>
<dbReference type="EMBL" id="RDQH01000332">
    <property type="protein sequence ID" value="RXH96124.1"/>
    <property type="molecule type" value="Genomic_DNA"/>
</dbReference>
<dbReference type="RefSeq" id="XP_008352013.1">
    <property type="nucleotide sequence ID" value="XM_008353791.2"/>
</dbReference>
<dbReference type="RefSeq" id="XP_008393853.1">
    <property type="nucleotide sequence ID" value="XM_008395631.2"/>
</dbReference>
<dbReference type="SMR" id="A0A498JQK2"/>
<dbReference type="STRING" id="3750.A0A498JQK2"/>
<dbReference type="OrthoDB" id="168599at2759"/>
<dbReference type="UniPathway" id="UPA00241">
    <property type="reaction ID" value="UER00354"/>
</dbReference>
<dbReference type="Proteomes" id="UP000290289">
    <property type="component" value="Chromosome 6"/>
</dbReference>
<dbReference type="GO" id="GO:0005737">
    <property type="term" value="C:cytoplasm"/>
    <property type="evidence" value="ECO:0000314"/>
    <property type="project" value="UniProtKB"/>
</dbReference>
<dbReference type="GO" id="GO:0071513">
    <property type="term" value="C:phosphopantothenoylcysteine decarboxylase complex"/>
    <property type="evidence" value="ECO:0007669"/>
    <property type="project" value="TreeGrafter"/>
</dbReference>
<dbReference type="GO" id="GO:0005886">
    <property type="term" value="C:plasma membrane"/>
    <property type="evidence" value="ECO:0000314"/>
    <property type="project" value="UniProtKB"/>
</dbReference>
<dbReference type="GO" id="GO:0010181">
    <property type="term" value="F:FMN binding"/>
    <property type="evidence" value="ECO:0007669"/>
    <property type="project" value="TreeGrafter"/>
</dbReference>
<dbReference type="GO" id="GO:0004633">
    <property type="term" value="F:phosphopantothenoylcysteine decarboxylase activity"/>
    <property type="evidence" value="ECO:0000314"/>
    <property type="project" value="UniProtKB"/>
</dbReference>
<dbReference type="GO" id="GO:0015937">
    <property type="term" value="P:coenzyme A biosynthetic process"/>
    <property type="evidence" value="ECO:0007669"/>
    <property type="project" value="UniProtKB-KW"/>
</dbReference>
<dbReference type="GO" id="GO:1901002">
    <property type="term" value="P:positive regulation of response to salt stress"/>
    <property type="evidence" value="ECO:0000315"/>
    <property type="project" value="UniProtKB"/>
</dbReference>
<dbReference type="GO" id="GO:2000280">
    <property type="term" value="P:regulation of root development"/>
    <property type="evidence" value="ECO:0000315"/>
    <property type="project" value="UniProtKB"/>
</dbReference>
<dbReference type="GO" id="GO:0009651">
    <property type="term" value="P:response to salt stress"/>
    <property type="evidence" value="ECO:0000270"/>
    <property type="project" value="UniProtKB"/>
</dbReference>
<dbReference type="FunFam" id="3.40.50.1950:FF:000004">
    <property type="entry name" value="Phosphopantothenoylcysteine decarboxylase"/>
    <property type="match status" value="1"/>
</dbReference>
<dbReference type="Gene3D" id="3.40.50.1950">
    <property type="entry name" value="Flavin prenyltransferase-like"/>
    <property type="match status" value="1"/>
</dbReference>
<dbReference type="InterPro" id="IPR036551">
    <property type="entry name" value="Flavin_trans-like"/>
</dbReference>
<dbReference type="InterPro" id="IPR003382">
    <property type="entry name" value="Flavoprotein"/>
</dbReference>
<dbReference type="PANTHER" id="PTHR14359">
    <property type="entry name" value="HOMO-OLIGOMERIC FLAVIN CONTAINING CYS DECARBOXYLASE FAMILY"/>
    <property type="match status" value="1"/>
</dbReference>
<dbReference type="PANTHER" id="PTHR14359:SF6">
    <property type="entry name" value="PHOSPHOPANTOTHENOYLCYSTEINE DECARBOXYLASE"/>
    <property type="match status" value="1"/>
</dbReference>
<dbReference type="Pfam" id="PF02441">
    <property type="entry name" value="Flavoprotein"/>
    <property type="match status" value="1"/>
</dbReference>
<dbReference type="SUPFAM" id="SSF52507">
    <property type="entry name" value="Homo-oligomeric flavin-containing Cys decarboxylases, HFCD"/>
    <property type="match status" value="1"/>
</dbReference>
<feature type="chain" id="PRO_0000462128" description="Phosphopantothenoylcysteine decarboxylase HAL3">
    <location>
        <begin position="1"/>
        <end position="214"/>
    </location>
</feature>
<feature type="active site" description="Proton donor" evidence="1">
    <location>
        <position position="92"/>
    </location>
</feature>
<feature type="active site" description="Proton donor" evidence="1">
    <location>
        <position position="177"/>
    </location>
</feature>
<feature type="binding site" evidence="1">
    <location>
        <begin position="30"/>
        <end position="32"/>
    </location>
    <ligand>
        <name>FMN</name>
        <dbReference type="ChEBI" id="CHEBI:58210"/>
    </ligand>
</feature>
<feature type="binding site" evidence="1">
    <location>
        <begin position="55"/>
        <end position="57"/>
    </location>
    <ligand>
        <name>FMN</name>
        <dbReference type="ChEBI" id="CHEBI:58210"/>
    </ligand>
</feature>
<feature type="binding site" evidence="1">
    <location>
        <begin position="108"/>
        <end position="111"/>
    </location>
    <ligand>
        <name>FMN</name>
        <dbReference type="ChEBI" id="CHEBI:58210"/>
    </ligand>
</feature>
<feature type="binding site" evidence="1">
    <location>
        <position position="142"/>
    </location>
    <ligand>
        <name>FMN</name>
        <dbReference type="ChEBI" id="CHEBI:58210"/>
    </ligand>
</feature>
<feature type="binding site" evidence="1">
    <location>
        <position position="144"/>
    </location>
    <ligand>
        <name>N-[(R)-4-phosphopantothenoyl]-L-cysteine</name>
        <dbReference type="ChEBI" id="CHEBI:59458"/>
    </ligand>
</feature>
<feature type="binding site" evidence="1">
    <location>
        <position position="174"/>
    </location>
    <ligand>
        <name>N-[(R)-4-phosphopantothenoyl]-L-cysteine</name>
        <dbReference type="ChEBI" id="CHEBI:59458"/>
    </ligand>
</feature>
<feature type="binding site" evidence="1">
    <location>
        <position position="176"/>
    </location>
    <ligand>
        <name>N-[(R)-4-phosphopantothenoyl]-L-cysteine</name>
        <dbReference type="ChEBI" id="CHEBI:59458"/>
    </ligand>
</feature>
<feature type="binding site" evidence="1">
    <location>
        <position position="185"/>
    </location>
    <ligand>
        <name>N-[(R)-4-phosphopantothenoyl]-L-cysteine</name>
        <dbReference type="ChEBI" id="CHEBI:59458"/>
    </ligand>
</feature>
<feature type="site" description="Important for catalytic activity" evidence="1">
    <location>
        <position position="177"/>
    </location>
</feature>